<sequence length="736" mass="81820">MPRYKTVEQVLSLMKDRTRVRNIGIIAHVDHGKTTTSDTLLAASGIISPKVAGEALALDYLNVEQQRGITVKAANISLYHEAEGKGYVINLIDTPGHVDFSGRVTRSLRVLDGSIVVVDAVEGIMTQTETVLRQSLEERVRPILFINKVDRLVKELKLSPQEMLNRLLDIIRQVNNLIDMYGEPEFKEKWMINPQAGNVIFGSAKDKWGFSLPMAQKKGINMKNVIDAYTASDKSKLEELAAQAPINEALLDAAIKFVPNPIEAQKYRIPKIWKGDLDNELAKAMLNADPNGPIVFMITDMKVDPHAGLVATGRVFSGTLRSGEELWLVNAKTSQRILQVSLYMGPTRELAEEIPAGNIAAVLGLDRARSGETAISVGFSNVQGSFERLHYISEPVVTIAVEPKNPKDLTKMIDALRKLSIEDPNLVVKINEETGEYLLSGMGFLHLEVSLQLLRENYGIDVVTTPPIVVYRESIRAKSQVFEGKSPNKHNKFYLSVEPLNDKTIELISNGTIREDMDSKEMAKILRDEASWDYDEAKRIIAIDENVNVFVDLTSGVQHLREVMDTVLQGFRLAMKEGPLAHEPIRGVKVILHDAVIHEDPAHRGPAQIYPAVRNSIFAGFLTSRPTLLEPIQKLDIRVPADLIGNVTAVITRKRGKILDVSQIANMSRITAEIPVSESYDMASELRGSTGGRAFWGTEFSRWAPVPDSILLDVVTKIRERKGLPKELPKVEDFLS</sequence>
<comment type="function">
    <text>Catalyzes the GTP-dependent ribosomal translocation step during translation elongation. During this step, the ribosome changes from the pre-translocational (PRE) to the post-translocational (POST) state as the newly formed A-site-bound peptidyl-tRNA and P-site-bound deacylated tRNA move to the P and E sites, respectively. Catalyzes the coordinated movement of the two tRNA molecules, the mRNA and conformational changes in the ribosome.</text>
</comment>
<comment type="subcellular location">
    <subcellularLocation>
        <location>Cytoplasm</location>
    </subcellularLocation>
</comment>
<comment type="similarity">
    <text evidence="3">Belongs to the TRAFAC class translation factor GTPase superfamily. Classic translation factor GTPase family. EF-G/EF-2 subfamily.</text>
</comment>
<gene>
    <name type="primary">fusA</name>
    <name type="synonym">fus</name>
    <name type="ordered locus">SSO0728</name>
    <name type="ORF">C10_002</name>
</gene>
<reference key="1">
    <citation type="journal article" date="1993" name="Gene">
        <title>Cloning and sequencing of the gene encoding thermostable elongation factor 2 in Sulfolobus solfataricus.</title>
        <authorList>
            <person name="de Vendittis E."/>
            <person name="Amatruda M.R."/>
            <person name="Masullo M."/>
            <person name="Bocchini V."/>
        </authorList>
    </citation>
    <scope>NUCLEOTIDE SEQUENCE [GENOMIC DNA]</scope>
    <source>
        <strain>DSM 5833 / MT-4</strain>
    </source>
</reference>
<reference key="2">
    <citation type="journal article" date="2000" name="Genome">
        <title>Gene content and organization of a 281-kbp contig from the genome of the extremely thermophilic archaeon, Sulfolobus solfataricus P2.</title>
        <authorList>
            <person name="Charlebois R.L."/>
            <person name="Singh R.K."/>
            <person name="Chan-Weiher C.C.-Y."/>
            <person name="Allard G."/>
            <person name="Chow C."/>
            <person name="Confalonieri F."/>
            <person name="Curtis B."/>
            <person name="Duguet M."/>
            <person name="Erauso G."/>
            <person name="Faguy D."/>
            <person name="Gaasterland T."/>
            <person name="Garrett R.A."/>
            <person name="Gordon P."/>
            <person name="Jeffries A.C."/>
            <person name="Kozera C."/>
            <person name="Kushwaha N."/>
            <person name="Lafleur E."/>
            <person name="Medina N."/>
            <person name="Peng X."/>
            <person name="Penny S.L."/>
            <person name="She Q."/>
            <person name="St Jean A."/>
            <person name="van der Oost J."/>
            <person name="Young F."/>
            <person name="Zivanovic Y."/>
            <person name="Doolittle W.F."/>
            <person name="Ragan M.A."/>
            <person name="Sensen C.W."/>
        </authorList>
    </citation>
    <scope>NUCLEOTIDE SEQUENCE [LARGE SCALE GENOMIC DNA]</scope>
    <source>
        <strain>ATCC 35092 / DSM 1617 / JCM 11322 / P2</strain>
    </source>
</reference>
<reference key="3">
    <citation type="journal article" date="2001" name="Proc. Natl. Acad. Sci. U.S.A.">
        <title>The complete genome of the crenarchaeon Sulfolobus solfataricus P2.</title>
        <authorList>
            <person name="She Q."/>
            <person name="Singh R.K."/>
            <person name="Confalonieri F."/>
            <person name="Zivanovic Y."/>
            <person name="Allard G."/>
            <person name="Awayez M.J."/>
            <person name="Chan-Weiher C.C.-Y."/>
            <person name="Clausen I.G."/>
            <person name="Curtis B.A."/>
            <person name="De Moors A."/>
            <person name="Erauso G."/>
            <person name="Fletcher C."/>
            <person name="Gordon P.M.K."/>
            <person name="Heikamp-de Jong I."/>
            <person name="Jeffries A.C."/>
            <person name="Kozera C.J."/>
            <person name="Medina N."/>
            <person name="Peng X."/>
            <person name="Thi-Ngoc H.P."/>
            <person name="Redder P."/>
            <person name="Schenk M.E."/>
            <person name="Theriault C."/>
            <person name="Tolstrup N."/>
            <person name="Charlebois R.L."/>
            <person name="Doolittle W.F."/>
            <person name="Duguet M."/>
            <person name="Gaasterland T."/>
            <person name="Garrett R.A."/>
            <person name="Ragan M.A."/>
            <person name="Sensen C.W."/>
            <person name="Van der Oost J."/>
        </authorList>
    </citation>
    <scope>NUCLEOTIDE SEQUENCE [LARGE SCALE GENOMIC DNA]</scope>
    <source>
        <strain>ATCC 35092 / DSM 1617 / JCM 11322 / P2</strain>
    </source>
</reference>
<reference key="4">
    <citation type="journal article" date="1992" name="Biochim. Biophys. Acta">
        <title>Molecular, functional and structural properties of an archaebacterial elongation factor 2.</title>
        <authorList>
            <person name="Raimo G."/>
            <person name="Masullo M."/>
            <person name="Parente A."/>
            <person name="Dello Russo A."/>
            <person name="Bocchini V."/>
        </authorList>
    </citation>
    <scope>PROTEIN SEQUENCE OF 2-23 AND 590-604</scope>
    <scope>DIPHTHAMIDE AT HIS-603</scope>
    <source>
        <strain>DSM 5833 / MT-4</strain>
    </source>
</reference>
<name>EF2_SACS2</name>
<evidence type="ECO:0000250" key="1"/>
<evidence type="ECO:0000269" key="2">
    <source>
    </source>
</evidence>
<evidence type="ECO:0000305" key="3"/>
<feature type="initiator methionine" description="Removed" evidence="2">
    <location>
        <position position="1"/>
    </location>
</feature>
<feature type="chain" id="PRO_0000091048" description="Elongation factor 2">
    <location>
        <begin position="2"/>
        <end position="736"/>
    </location>
</feature>
<feature type="domain" description="tr-type G">
    <location>
        <begin position="18"/>
        <end position="234"/>
    </location>
</feature>
<feature type="binding site" evidence="1">
    <location>
        <begin position="27"/>
        <end position="34"/>
    </location>
    <ligand>
        <name>GTP</name>
        <dbReference type="ChEBI" id="CHEBI:37565"/>
    </ligand>
</feature>
<feature type="binding site" evidence="1">
    <location>
        <begin position="93"/>
        <end position="97"/>
    </location>
    <ligand>
        <name>GTP</name>
        <dbReference type="ChEBI" id="CHEBI:37565"/>
    </ligand>
</feature>
<feature type="binding site" evidence="1">
    <location>
        <begin position="147"/>
        <end position="150"/>
    </location>
    <ligand>
        <name>GTP</name>
        <dbReference type="ChEBI" id="CHEBI:37565"/>
    </ligand>
</feature>
<feature type="modified residue" description="Diphthamide" evidence="2">
    <location>
        <position position="603"/>
    </location>
</feature>
<accession>P30925</accession>
<keyword id="KW-0963">Cytoplasm</keyword>
<keyword id="KW-0903">Direct protein sequencing</keyword>
<keyword id="KW-0251">Elongation factor</keyword>
<keyword id="KW-0342">GTP-binding</keyword>
<keyword id="KW-0547">Nucleotide-binding</keyword>
<keyword id="KW-0648">Protein biosynthesis</keyword>
<keyword id="KW-1185">Reference proteome</keyword>
<proteinExistence type="evidence at protein level"/>
<dbReference type="EMBL" id="X69297">
    <property type="protein sequence ID" value="CAA49157.1"/>
    <property type="molecule type" value="Genomic_DNA"/>
</dbReference>
<dbReference type="EMBL" id="Y18930">
    <property type="protein sequence ID" value="CAB57575.1"/>
    <property type="molecule type" value="Genomic_DNA"/>
</dbReference>
<dbReference type="EMBL" id="AE006641">
    <property type="protein sequence ID" value="AAK41025.1"/>
    <property type="molecule type" value="Genomic_DNA"/>
</dbReference>
<dbReference type="PIR" id="S31809">
    <property type="entry name" value="S31809"/>
</dbReference>
<dbReference type="RefSeq" id="WP_009991295.1">
    <property type="nucleotide sequence ID" value="NC_002754.1"/>
</dbReference>
<dbReference type="SMR" id="P30925"/>
<dbReference type="FunCoup" id="P30925">
    <property type="interactions" value="255"/>
</dbReference>
<dbReference type="STRING" id="273057.SSO0728"/>
<dbReference type="PaxDb" id="273057-SSO0728"/>
<dbReference type="EnsemblBacteria" id="AAK41025">
    <property type="protein sequence ID" value="AAK41025"/>
    <property type="gene ID" value="SSO0728"/>
</dbReference>
<dbReference type="KEGG" id="sso:SSO0728"/>
<dbReference type="PATRIC" id="fig|273057.12.peg.725"/>
<dbReference type="eggNOG" id="arCOG01559">
    <property type="taxonomic scope" value="Archaea"/>
</dbReference>
<dbReference type="HOGENOM" id="CLU_002794_11_1_2"/>
<dbReference type="InParanoid" id="P30925"/>
<dbReference type="PhylomeDB" id="P30925"/>
<dbReference type="BRENDA" id="3.6.5.3">
    <property type="organism ID" value="6163"/>
</dbReference>
<dbReference type="Proteomes" id="UP000001974">
    <property type="component" value="Chromosome"/>
</dbReference>
<dbReference type="GO" id="GO:0005829">
    <property type="term" value="C:cytosol"/>
    <property type="evidence" value="ECO:0000318"/>
    <property type="project" value="GO_Central"/>
</dbReference>
<dbReference type="GO" id="GO:1990904">
    <property type="term" value="C:ribonucleoprotein complex"/>
    <property type="evidence" value="ECO:0000318"/>
    <property type="project" value="GO_Central"/>
</dbReference>
<dbReference type="GO" id="GO:0005525">
    <property type="term" value="F:GTP binding"/>
    <property type="evidence" value="ECO:0007669"/>
    <property type="project" value="UniProtKB-UniRule"/>
</dbReference>
<dbReference type="GO" id="GO:0003924">
    <property type="term" value="F:GTPase activity"/>
    <property type="evidence" value="ECO:0000318"/>
    <property type="project" value="GO_Central"/>
</dbReference>
<dbReference type="GO" id="GO:0003746">
    <property type="term" value="F:translation elongation factor activity"/>
    <property type="evidence" value="ECO:0000318"/>
    <property type="project" value="GO_Central"/>
</dbReference>
<dbReference type="GO" id="GO:0006414">
    <property type="term" value="P:translational elongation"/>
    <property type="evidence" value="ECO:0000318"/>
    <property type="project" value="GO_Central"/>
</dbReference>
<dbReference type="CDD" id="cd01681">
    <property type="entry name" value="aeEF2_snRNP_like_IV"/>
    <property type="match status" value="1"/>
</dbReference>
<dbReference type="CDD" id="cd01885">
    <property type="entry name" value="EF2"/>
    <property type="match status" value="1"/>
</dbReference>
<dbReference type="CDD" id="cd16268">
    <property type="entry name" value="EF2_II"/>
    <property type="match status" value="1"/>
</dbReference>
<dbReference type="CDD" id="cd16261">
    <property type="entry name" value="EF2_snRNP_III"/>
    <property type="match status" value="1"/>
</dbReference>
<dbReference type="CDD" id="cd01514">
    <property type="entry name" value="Elongation_Factor_C"/>
    <property type="match status" value="1"/>
</dbReference>
<dbReference type="FunFam" id="3.30.230.10:FF:000009">
    <property type="entry name" value="116 kDa U5 small nuclear ribonucleoprotein component"/>
    <property type="match status" value="1"/>
</dbReference>
<dbReference type="FunFam" id="3.30.70.240:FF:000010">
    <property type="entry name" value="Elongation factor 2"/>
    <property type="match status" value="1"/>
</dbReference>
<dbReference type="FunFam" id="3.40.50.300:FF:000684">
    <property type="entry name" value="Elongation factor 2"/>
    <property type="match status" value="1"/>
</dbReference>
<dbReference type="FunFam" id="3.30.70.870:FF:000002">
    <property type="entry name" value="Translation elongation factor 2"/>
    <property type="match status" value="1"/>
</dbReference>
<dbReference type="Gene3D" id="3.30.230.10">
    <property type="match status" value="1"/>
</dbReference>
<dbReference type="Gene3D" id="3.30.70.240">
    <property type="match status" value="1"/>
</dbReference>
<dbReference type="Gene3D" id="3.30.70.870">
    <property type="entry name" value="Elongation Factor G (Translational Gtpase), domain 3"/>
    <property type="match status" value="1"/>
</dbReference>
<dbReference type="Gene3D" id="3.40.50.300">
    <property type="entry name" value="P-loop containing nucleotide triphosphate hydrolases"/>
    <property type="match status" value="1"/>
</dbReference>
<dbReference type="Gene3D" id="2.40.30.10">
    <property type="entry name" value="Translation factors"/>
    <property type="match status" value="1"/>
</dbReference>
<dbReference type="HAMAP" id="MF_00054_A">
    <property type="entry name" value="EF_G_EF_2_A"/>
    <property type="match status" value="1"/>
</dbReference>
<dbReference type="InterPro" id="IPR041095">
    <property type="entry name" value="EFG_II"/>
</dbReference>
<dbReference type="InterPro" id="IPR035647">
    <property type="entry name" value="EFG_III/V"/>
</dbReference>
<dbReference type="InterPro" id="IPR000640">
    <property type="entry name" value="EFG_V-like"/>
</dbReference>
<dbReference type="InterPro" id="IPR004161">
    <property type="entry name" value="EFTu-like_2"/>
</dbReference>
<dbReference type="InterPro" id="IPR031157">
    <property type="entry name" value="G_TR_CS"/>
</dbReference>
<dbReference type="InterPro" id="IPR027417">
    <property type="entry name" value="P-loop_NTPase"/>
</dbReference>
<dbReference type="InterPro" id="IPR020568">
    <property type="entry name" value="Ribosomal_Su5_D2-typ_SF"/>
</dbReference>
<dbReference type="InterPro" id="IPR014721">
    <property type="entry name" value="Ribsml_uS5_D2-typ_fold_subgr"/>
</dbReference>
<dbReference type="InterPro" id="IPR005225">
    <property type="entry name" value="Small_GTP-bd"/>
</dbReference>
<dbReference type="InterPro" id="IPR000795">
    <property type="entry name" value="T_Tr_GTP-bd_dom"/>
</dbReference>
<dbReference type="InterPro" id="IPR009000">
    <property type="entry name" value="Transl_B-barrel_sf"/>
</dbReference>
<dbReference type="InterPro" id="IPR004543">
    <property type="entry name" value="Transl_elong_EFG/EF2_arc"/>
</dbReference>
<dbReference type="InterPro" id="IPR005517">
    <property type="entry name" value="Transl_elong_EFG/EF2_IV"/>
</dbReference>
<dbReference type="NCBIfam" id="TIGR00490">
    <property type="entry name" value="aEF-2"/>
    <property type="match status" value="1"/>
</dbReference>
<dbReference type="NCBIfam" id="TIGR00231">
    <property type="entry name" value="small_GTP"/>
    <property type="match status" value="1"/>
</dbReference>
<dbReference type="PANTHER" id="PTHR42908:SF3">
    <property type="entry name" value="ELONGATION FACTOR-LIKE GTPASE 1"/>
    <property type="match status" value="1"/>
</dbReference>
<dbReference type="PANTHER" id="PTHR42908">
    <property type="entry name" value="TRANSLATION ELONGATION FACTOR-RELATED"/>
    <property type="match status" value="1"/>
</dbReference>
<dbReference type="Pfam" id="PF00679">
    <property type="entry name" value="EFG_C"/>
    <property type="match status" value="1"/>
</dbReference>
<dbReference type="Pfam" id="PF14492">
    <property type="entry name" value="EFG_III"/>
    <property type="match status" value="1"/>
</dbReference>
<dbReference type="Pfam" id="PF03764">
    <property type="entry name" value="EFG_IV"/>
    <property type="match status" value="1"/>
</dbReference>
<dbReference type="Pfam" id="PF00009">
    <property type="entry name" value="GTP_EFTU"/>
    <property type="match status" value="1"/>
</dbReference>
<dbReference type="Pfam" id="PF03144">
    <property type="entry name" value="GTP_EFTU_D2"/>
    <property type="match status" value="1"/>
</dbReference>
<dbReference type="PRINTS" id="PR00315">
    <property type="entry name" value="ELONGATNFCT"/>
</dbReference>
<dbReference type="SMART" id="SM00838">
    <property type="entry name" value="EFG_C"/>
    <property type="match status" value="1"/>
</dbReference>
<dbReference type="SMART" id="SM00889">
    <property type="entry name" value="EFG_IV"/>
    <property type="match status" value="1"/>
</dbReference>
<dbReference type="SUPFAM" id="SSF54980">
    <property type="entry name" value="EF-G C-terminal domain-like"/>
    <property type="match status" value="2"/>
</dbReference>
<dbReference type="SUPFAM" id="SSF52540">
    <property type="entry name" value="P-loop containing nucleoside triphosphate hydrolases"/>
    <property type="match status" value="1"/>
</dbReference>
<dbReference type="SUPFAM" id="SSF54211">
    <property type="entry name" value="Ribosomal protein S5 domain 2-like"/>
    <property type="match status" value="1"/>
</dbReference>
<dbReference type="SUPFAM" id="SSF50447">
    <property type="entry name" value="Translation proteins"/>
    <property type="match status" value="1"/>
</dbReference>
<dbReference type="PROSITE" id="PS00301">
    <property type="entry name" value="G_TR_1"/>
    <property type="match status" value="1"/>
</dbReference>
<dbReference type="PROSITE" id="PS51722">
    <property type="entry name" value="G_TR_2"/>
    <property type="match status" value="1"/>
</dbReference>
<protein>
    <recommendedName>
        <fullName>Elongation factor 2</fullName>
        <shortName>EF-2</shortName>
    </recommendedName>
</protein>
<organism>
    <name type="scientific">Saccharolobus solfataricus (strain ATCC 35092 / DSM 1617 / JCM 11322 / P2)</name>
    <name type="common">Sulfolobus solfataricus</name>
    <dbReference type="NCBI Taxonomy" id="273057"/>
    <lineage>
        <taxon>Archaea</taxon>
        <taxon>Thermoproteota</taxon>
        <taxon>Thermoprotei</taxon>
        <taxon>Sulfolobales</taxon>
        <taxon>Sulfolobaceae</taxon>
        <taxon>Saccharolobus</taxon>
    </lineage>
</organism>